<sequence>MDLFEYQARDMFEAHGVPVLAGIVAHTPEEAKAAAEKIGGVTVVKAQVKVGGRGKAGGVKVAKTAEEALEHSTNILGMDIKGHTVNKVMIAQGADIAEEFYFSVLLDRANRNYLAMCSVEGGMEIEQLAVERPEALAKIAIDPAVGIDQAKADEIVAAAGFAEELRGKVADVILKLWDVFKKEDATLVEVNPLVRTGAGEIVALDGKVSLDENADFRHVHHAHLEDKDAADPLEAKAKAQDLNYVKLDGEVGIIGNGAGLVMSTLDVVAYAGENHGNVKPANFLDIGGGASAEVMANGLDVILGDSQVKSVFVNVFGGITACDAVAKGIVGALAELGSSANKPLVVRLDGNNVEEGRRILTEANHPLVTLAATMDEGADKAAELANAAK</sequence>
<keyword id="KW-0067">ATP-binding</keyword>
<keyword id="KW-0436">Ligase</keyword>
<keyword id="KW-0460">Magnesium</keyword>
<keyword id="KW-0479">Metal-binding</keyword>
<keyword id="KW-0547">Nucleotide-binding</keyword>
<keyword id="KW-0816">Tricarboxylic acid cycle</keyword>
<comment type="function">
    <text evidence="1">Succinyl-CoA synthetase functions in the citric acid cycle (TCA), coupling the hydrolysis of succinyl-CoA to the synthesis of either ATP or GTP and thus represents the only step of substrate-level phosphorylation in the TCA. The beta subunit provides nucleotide specificity of the enzyme and binds the substrate succinate, while the binding sites for coenzyme A and phosphate are found in the alpha subunit.</text>
</comment>
<comment type="catalytic activity">
    <reaction evidence="1">
        <text>succinate + ATP + CoA = succinyl-CoA + ADP + phosphate</text>
        <dbReference type="Rhea" id="RHEA:17661"/>
        <dbReference type="ChEBI" id="CHEBI:30031"/>
        <dbReference type="ChEBI" id="CHEBI:30616"/>
        <dbReference type="ChEBI" id="CHEBI:43474"/>
        <dbReference type="ChEBI" id="CHEBI:57287"/>
        <dbReference type="ChEBI" id="CHEBI:57292"/>
        <dbReference type="ChEBI" id="CHEBI:456216"/>
        <dbReference type="EC" id="6.2.1.5"/>
    </reaction>
    <physiologicalReaction direction="right-to-left" evidence="1">
        <dbReference type="Rhea" id="RHEA:17663"/>
    </physiologicalReaction>
</comment>
<comment type="catalytic activity">
    <reaction evidence="1">
        <text>GTP + succinate + CoA = succinyl-CoA + GDP + phosphate</text>
        <dbReference type="Rhea" id="RHEA:22120"/>
        <dbReference type="ChEBI" id="CHEBI:30031"/>
        <dbReference type="ChEBI" id="CHEBI:37565"/>
        <dbReference type="ChEBI" id="CHEBI:43474"/>
        <dbReference type="ChEBI" id="CHEBI:57287"/>
        <dbReference type="ChEBI" id="CHEBI:57292"/>
        <dbReference type="ChEBI" id="CHEBI:58189"/>
    </reaction>
    <physiologicalReaction direction="right-to-left" evidence="1">
        <dbReference type="Rhea" id="RHEA:22122"/>
    </physiologicalReaction>
</comment>
<comment type="cofactor">
    <cofactor evidence="1">
        <name>Mg(2+)</name>
        <dbReference type="ChEBI" id="CHEBI:18420"/>
    </cofactor>
    <text evidence="1">Binds 1 Mg(2+) ion per subunit.</text>
</comment>
<comment type="pathway">
    <text evidence="1">Carbohydrate metabolism; tricarboxylic acid cycle; succinate from succinyl-CoA (ligase route): step 1/1.</text>
</comment>
<comment type="subunit">
    <text evidence="1">Heterotetramer of two alpha and two beta subunits.</text>
</comment>
<comment type="similarity">
    <text evidence="1">Belongs to the succinate/malate CoA ligase beta subunit family.</text>
</comment>
<reference key="1">
    <citation type="journal article" date="2006" name="PLoS Genet.">
        <title>Secrets of soil survival revealed by the genome sequence of Arthrobacter aurescens TC1.</title>
        <authorList>
            <person name="Mongodin E.F."/>
            <person name="Shapir N."/>
            <person name="Daugherty S.C."/>
            <person name="DeBoy R.T."/>
            <person name="Emerson J.B."/>
            <person name="Shvartzbeyn A."/>
            <person name="Radune D."/>
            <person name="Vamathevan J."/>
            <person name="Riggs F."/>
            <person name="Grinberg V."/>
            <person name="Khouri H.M."/>
            <person name="Wackett L.P."/>
            <person name="Nelson K.E."/>
            <person name="Sadowsky M.J."/>
        </authorList>
    </citation>
    <scope>NUCLEOTIDE SEQUENCE [LARGE SCALE GENOMIC DNA]</scope>
    <source>
        <strain>TC1</strain>
    </source>
</reference>
<protein>
    <recommendedName>
        <fullName evidence="1">Succinate--CoA ligase [ADP-forming] subunit beta</fullName>
        <ecNumber evidence="1">6.2.1.5</ecNumber>
    </recommendedName>
    <alternativeName>
        <fullName evidence="1">Succinyl-CoA synthetase subunit beta</fullName>
        <shortName evidence="1">SCS-beta</shortName>
    </alternativeName>
</protein>
<name>SUCC_PAEAT</name>
<evidence type="ECO:0000255" key="1">
    <source>
        <dbReference type="HAMAP-Rule" id="MF_00558"/>
    </source>
</evidence>
<organism>
    <name type="scientific">Paenarthrobacter aurescens (strain TC1)</name>
    <dbReference type="NCBI Taxonomy" id="290340"/>
    <lineage>
        <taxon>Bacteria</taxon>
        <taxon>Bacillati</taxon>
        <taxon>Actinomycetota</taxon>
        <taxon>Actinomycetes</taxon>
        <taxon>Micrococcales</taxon>
        <taxon>Micrococcaceae</taxon>
        <taxon>Paenarthrobacter</taxon>
    </lineage>
</organism>
<feature type="chain" id="PRO_1000082000" description="Succinate--CoA ligase [ADP-forming] subunit beta">
    <location>
        <begin position="1"/>
        <end position="389"/>
    </location>
</feature>
<feature type="domain" description="ATP-grasp" evidence="1">
    <location>
        <begin position="9"/>
        <end position="236"/>
    </location>
</feature>
<feature type="binding site" evidence="1">
    <location>
        <position position="45"/>
    </location>
    <ligand>
        <name>ATP</name>
        <dbReference type="ChEBI" id="CHEBI:30616"/>
    </ligand>
</feature>
<feature type="binding site" evidence="1">
    <location>
        <begin position="52"/>
        <end position="54"/>
    </location>
    <ligand>
        <name>ATP</name>
        <dbReference type="ChEBI" id="CHEBI:30616"/>
    </ligand>
</feature>
<feature type="binding site" evidence="1">
    <location>
        <position position="94"/>
    </location>
    <ligand>
        <name>ATP</name>
        <dbReference type="ChEBI" id="CHEBI:30616"/>
    </ligand>
</feature>
<feature type="binding site" evidence="1">
    <location>
        <position position="99"/>
    </location>
    <ligand>
        <name>ATP</name>
        <dbReference type="ChEBI" id="CHEBI:30616"/>
    </ligand>
</feature>
<feature type="binding site" evidence="1">
    <location>
        <position position="191"/>
    </location>
    <ligand>
        <name>Mg(2+)</name>
        <dbReference type="ChEBI" id="CHEBI:18420"/>
    </ligand>
</feature>
<feature type="binding site" evidence="1">
    <location>
        <position position="205"/>
    </location>
    <ligand>
        <name>Mg(2+)</name>
        <dbReference type="ChEBI" id="CHEBI:18420"/>
    </ligand>
</feature>
<feature type="binding site" evidence="1">
    <location>
        <position position="256"/>
    </location>
    <ligand>
        <name>substrate</name>
        <note>ligand shared with subunit alpha</note>
    </ligand>
</feature>
<feature type="binding site" evidence="1">
    <location>
        <begin position="318"/>
        <end position="320"/>
    </location>
    <ligand>
        <name>substrate</name>
        <note>ligand shared with subunit alpha</note>
    </ligand>
</feature>
<accession>A1R3M0</accession>
<dbReference type="EC" id="6.2.1.5" evidence="1"/>
<dbReference type="EMBL" id="CP000474">
    <property type="protein sequence ID" value="ABM09994.1"/>
    <property type="molecule type" value="Genomic_DNA"/>
</dbReference>
<dbReference type="RefSeq" id="WP_011773779.1">
    <property type="nucleotide sequence ID" value="NC_008711.1"/>
</dbReference>
<dbReference type="SMR" id="A1R3M0"/>
<dbReference type="STRING" id="290340.AAur_1044"/>
<dbReference type="GeneID" id="97300027"/>
<dbReference type="KEGG" id="aau:AAur_1044"/>
<dbReference type="eggNOG" id="COG0045">
    <property type="taxonomic scope" value="Bacteria"/>
</dbReference>
<dbReference type="HOGENOM" id="CLU_037430_4_0_11"/>
<dbReference type="OrthoDB" id="9802602at2"/>
<dbReference type="UniPathway" id="UPA00223">
    <property type="reaction ID" value="UER00999"/>
</dbReference>
<dbReference type="Proteomes" id="UP000000637">
    <property type="component" value="Chromosome"/>
</dbReference>
<dbReference type="GO" id="GO:0005829">
    <property type="term" value="C:cytosol"/>
    <property type="evidence" value="ECO:0007669"/>
    <property type="project" value="TreeGrafter"/>
</dbReference>
<dbReference type="GO" id="GO:0042709">
    <property type="term" value="C:succinate-CoA ligase complex"/>
    <property type="evidence" value="ECO:0007669"/>
    <property type="project" value="TreeGrafter"/>
</dbReference>
<dbReference type="GO" id="GO:0005524">
    <property type="term" value="F:ATP binding"/>
    <property type="evidence" value="ECO:0007669"/>
    <property type="project" value="UniProtKB-UniRule"/>
</dbReference>
<dbReference type="GO" id="GO:0000287">
    <property type="term" value="F:magnesium ion binding"/>
    <property type="evidence" value="ECO:0007669"/>
    <property type="project" value="UniProtKB-UniRule"/>
</dbReference>
<dbReference type="GO" id="GO:0004775">
    <property type="term" value="F:succinate-CoA ligase (ADP-forming) activity"/>
    <property type="evidence" value="ECO:0007669"/>
    <property type="project" value="UniProtKB-UniRule"/>
</dbReference>
<dbReference type="GO" id="GO:0004776">
    <property type="term" value="F:succinate-CoA ligase (GDP-forming) activity"/>
    <property type="evidence" value="ECO:0007669"/>
    <property type="project" value="RHEA"/>
</dbReference>
<dbReference type="GO" id="GO:0006104">
    <property type="term" value="P:succinyl-CoA metabolic process"/>
    <property type="evidence" value="ECO:0007669"/>
    <property type="project" value="TreeGrafter"/>
</dbReference>
<dbReference type="GO" id="GO:0006099">
    <property type="term" value="P:tricarboxylic acid cycle"/>
    <property type="evidence" value="ECO:0007669"/>
    <property type="project" value="UniProtKB-UniRule"/>
</dbReference>
<dbReference type="FunFam" id="3.30.1490.20:FF:000014">
    <property type="entry name" value="Succinate--CoA ligase [ADP-forming] subunit beta"/>
    <property type="match status" value="1"/>
</dbReference>
<dbReference type="FunFam" id="3.30.470.20:FF:000002">
    <property type="entry name" value="Succinate--CoA ligase [ADP-forming] subunit beta"/>
    <property type="match status" value="1"/>
</dbReference>
<dbReference type="FunFam" id="3.40.50.261:FF:000007">
    <property type="entry name" value="Succinate--CoA ligase [ADP-forming] subunit beta"/>
    <property type="match status" value="1"/>
</dbReference>
<dbReference type="Gene3D" id="3.30.1490.20">
    <property type="entry name" value="ATP-grasp fold, A domain"/>
    <property type="match status" value="1"/>
</dbReference>
<dbReference type="Gene3D" id="3.30.470.20">
    <property type="entry name" value="ATP-grasp fold, B domain"/>
    <property type="match status" value="1"/>
</dbReference>
<dbReference type="Gene3D" id="3.40.50.261">
    <property type="entry name" value="Succinyl-CoA synthetase domains"/>
    <property type="match status" value="1"/>
</dbReference>
<dbReference type="HAMAP" id="MF_00558">
    <property type="entry name" value="Succ_CoA_beta"/>
    <property type="match status" value="1"/>
</dbReference>
<dbReference type="InterPro" id="IPR011761">
    <property type="entry name" value="ATP-grasp"/>
</dbReference>
<dbReference type="InterPro" id="IPR013650">
    <property type="entry name" value="ATP-grasp_succ-CoA_synth-type"/>
</dbReference>
<dbReference type="InterPro" id="IPR013815">
    <property type="entry name" value="ATP_grasp_subdomain_1"/>
</dbReference>
<dbReference type="InterPro" id="IPR017866">
    <property type="entry name" value="Succ-CoA_synthase_bsu_CS"/>
</dbReference>
<dbReference type="InterPro" id="IPR005811">
    <property type="entry name" value="SUCC_ACL_C"/>
</dbReference>
<dbReference type="InterPro" id="IPR005809">
    <property type="entry name" value="Succ_CoA_ligase-like_bsu"/>
</dbReference>
<dbReference type="InterPro" id="IPR016102">
    <property type="entry name" value="Succinyl-CoA_synth-like"/>
</dbReference>
<dbReference type="NCBIfam" id="NF001913">
    <property type="entry name" value="PRK00696.1"/>
    <property type="match status" value="1"/>
</dbReference>
<dbReference type="NCBIfam" id="TIGR01016">
    <property type="entry name" value="sucCoAbeta"/>
    <property type="match status" value="1"/>
</dbReference>
<dbReference type="PANTHER" id="PTHR11815:SF10">
    <property type="entry name" value="SUCCINATE--COA LIGASE [GDP-FORMING] SUBUNIT BETA, MITOCHONDRIAL"/>
    <property type="match status" value="1"/>
</dbReference>
<dbReference type="PANTHER" id="PTHR11815">
    <property type="entry name" value="SUCCINYL-COA SYNTHETASE BETA CHAIN"/>
    <property type="match status" value="1"/>
</dbReference>
<dbReference type="Pfam" id="PF08442">
    <property type="entry name" value="ATP-grasp_2"/>
    <property type="match status" value="1"/>
</dbReference>
<dbReference type="Pfam" id="PF00549">
    <property type="entry name" value="Ligase_CoA"/>
    <property type="match status" value="1"/>
</dbReference>
<dbReference type="PIRSF" id="PIRSF001554">
    <property type="entry name" value="SucCS_beta"/>
    <property type="match status" value="1"/>
</dbReference>
<dbReference type="SUPFAM" id="SSF56059">
    <property type="entry name" value="Glutathione synthetase ATP-binding domain-like"/>
    <property type="match status" value="1"/>
</dbReference>
<dbReference type="SUPFAM" id="SSF52210">
    <property type="entry name" value="Succinyl-CoA synthetase domains"/>
    <property type="match status" value="1"/>
</dbReference>
<dbReference type="PROSITE" id="PS50975">
    <property type="entry name" value="ATP_GRASP"/>
    <property type="match status" value="1"/>
</dbReference>
<dbReference type="PROSITE" id="PS01217">
    <property type="entry name" value="SUCCINYL_COA_LIG_3"/>
    <property type="match status" value="1"/>
</dbReference>
<proteinExistence type="inferred from homology"/>
<gene>
    <name evidence="1" type="primary">sucC</name>
    <name type="ordered locus">AAur_1044</name>
</gene>